<evidence type="ECO:0000255" key="1">
    <source>
        <dbReference type="HAMAP-Rule" id="MF_00344"/>
    </source>
</evidence>
<name>GUAA_PECCP</name>
<comment type="function">
    <text evidence="1">Catalyzes the synthesis of GMP from XMP.</text>
</comment>
<comment type="catalytic activity">
    <reaction evidence="1">
        <text>XMP + L-glutamine + ATP + H2O = GMP + L-glutamate + AMP + diphosphate + 2 H(+)</text>
        <dbReference type="Rhea" id="RHEA:11680"/>
        <dbReference type="ChEBI" id="CHEBI:15377"/>
        <dbReference type="ChEBI" id="CHEBI:15378"/>
        <dbReference type="ChEBI" id="CHEBI:29985"/>
        <dbReference type="ChEBI" id="CHEBI:30616"/>
        <dbReference type="ChEBI" id="CHEBI:33019"/>
        <dbReference type="ChEBI" id="CHEBI:57464"/>
        <dbReference type="ChEBI" id="CHEBI:58115"/>
        <dbReference type="ChEBI" id="CHEBI:58359"/>
        <dbReference type="ChEBI" id="CHEBI:456215"/>
        <dbReference type="EC" id="6.3.5.2"/>
    </reaction>
</comment>
<comment type="pathway">
    <text evidence="1">Purine metabolism; GMP biosynthesis; GMP from XMP (L-Gln route): step 1/1.</text>
</comment>
<comment type="subunit">
    <text evidence="1">Homodimer.</text>
</comment>
<dbReference type="EC" id="6.3.5.2" evidence="1"/>
<dbReference type="EMBL" id="CP001657">
    <property type="protein sequence ID" value="ACT14026.1"/>
    <property type="molecule type" value="Genomic_DNA"/>
</dbReference>
<dbReference type="RefSeq" id="WP_015841180.1">
    <property type="nucleotide sequence ID" value="NC_012917.1"/>
</dbReference>
<dbReference type="SMR" id="C6DBG3"/>
<dbReference type="STRING" id="561230.PC1_3003"/>
<dbReference type="GeneID" id="67793161"/>
<dbReference type="KEGG" id="pct:PC1_3003"/>
<dbReference type="eggNOG" id="COG0518">
    <property type="taxonomic scope" value="Bacteria"/>
</dbReference>
<dbReference type="eggNOG" id="COG0519">
    <property type="taxonomic scope" value="Bacteria"/>
</dbReference>
<dbReference type="HOGENOM" id="CLU_014340_0_5_6"/>
<dbReference type="OrthoDB" id="9802219at2"/>
<dbReference type="UniPathway" id="UPA00189">
    <property type="reaction ID" value="UER00296"/>
</dbReference>
<dbReference type="Proteomes" id="UP000002736">
    <property type="component" value="Chromosome"/>
</dbReference>
<dbReference type="GO" id="GO:0005829">
    <property type="term" value="C:cytosol"/>
    <property type="evidence" value="ECO:0007669"/>
    <property type="project" value="TreeGrafter"/>
</dbReference>
<dbReference type="GO" id="GO:0005524">
    <property type="term" value="F:ATP binding"/>
    <property type="evidence" value="ECO:0007669"/>
    <property type="project" value="UniProtKB-UniRule"/>
</dbReference>
<dbReference type="GO" id="GO:0003921">
    <property type="term" value="F:GMP synthase activity"/>
    <property type="evidence" value="ECO:0007669"/>
    <property type="project" value="InterPro"/>
</dbReference>
<dbReference type="CDD" id="cd01742">
    <property type="entry name" value="GATase1_GMP_Synthase"/>
    <property type="match status" value="1"/>
</dbReference>
<dbReference type="CDD" id="cd01997">
    <property type="entry name" value="GMP_synthase_C"/>
    <property type="match status" value="1"/>
</dbReference>
<dbReference type="FunFam" id="3.30.300.10:FF:000002">
    <property type="entry name" value="GMP synthase [glutamine-hydrolyzing]"/>
    <property type="match status" value="1"/>
</dbReference>
<dbReference type="FunFam" id="3.40.50.620:FF:000001">
    <property type="entry name" value="GMP synthase [glutamine-hydrolyzing]"/>
    <property type="match status" value="1"/>
</dbReference>
<dbReference type="FunFam" id="3.40.50.880:FF:000001">
    <property type="entry name" value="GMP synthase [glutamine-hydrolyzing]"/>
    <property type="match status" value="1"/>
</dbReference>
<dbReference type="Gene3D" id="3.30.300.10">
    <property type="match status" value="1"/>
</dbReference>
<dbReference type="Gene3D" id="3.40.50.880">
    <property type="match status" value="1"/>
</dbReference>
<dbReference type="Gene3D" id="3.40.50.620">
    <property type="entry name" value="HUPs"/>
    <property type="match status" value="1"/>
</dbReference>
<dbReference type="HAMAP" id="MF_00344">
    <property type="entry name" value="GMP_synthase"/>
    <property type="match status" value="1"/>
</dbReference>
<dbReference type="InterPro" id="IPR029062">
    <property type="entry name" value="Class_I_gatase-like"/>
</dbReference>
<dbReference type="InterPro" id="IPR017926">
    <property type="entry name" value="GATASE"/>
</dbReference>
<dbReference type="InterPro" id="IPR001674">
    <property type="entry name" value="GMP_synth_C"/>
</dbReference>
<dbReference type="InterPro" id="IPR004739">
    <property type="entry name" value="GMP_synth_GATase"/>
</dbReference>
<dbReference type="InterPro" id="IPR022955">
    <property type="entry name" value="GMP_synthase"/>
</dbReference>
<dbReference type="InterPro" id="IPR025777">
    <property type="entry name" value="GMPS_ATP_PPase_dom"/>
</dbReference>
<dbReference type="InterPro" id="IPR022310">
    <property type="entry name" value="NAD/GMP_synthase"/>
</dbReference>
<dbReference type="InterPro" id="IPR014729">
    <property type="entry name" value="Rossmann-like_a/b/a_fold"/>
</dbReference>
<dbReference type="NCBIfam" id="TIGR00884">
    <property type="entry name" value="guaA_Cterm"/>
    <property type="match status" value="1"/>
</dbReference>
<dbReference type="NCBIfam" id="TIGR00888">
    <property type="entry name" value="guaA_Nterm"/>
    <property type="match status" value="1"/>
</dbReference>
<dbReference type="NCBIfam" id="NF000848">
    <property type="entry name" value="PRK00074.1"/>
    <property type="match status" value="1"/>
</dbReference>
<dbReference type="PANTHER" id="PTHR11922:SF2">
    <property type="entry name" value="GMP SYNTHASE [GLUTAMINE-HYDROLYZING]"/>
    <property type="match status" value="1"/>
</dbReference>
<dbReference type="PANTHER" id="PTHR11922">
    <property type="entry name" value="GMP SYNTHASE-RELATED"/>
    <property type="match status" value="1"/>
</dbReference>
<dbReference type="Pfam" id="PF00117">
    <property type="entry name" value="GATase"/>
    <property type="match status" value="1"/>
</dbReference>
<dbReference type="Pfam" id="PF00958">
    <property type="entry name" value="GMP_synt_C"/>
    <property type="match status" value="1"/>
</dbReference>
<dbReference type="Pfam" id="PF02540">
    <property type="entry name" value="NAD_synthase"/>
    <property type="match status" value="1"/>
</dbReference>
<dbReference type="PRINTS" id="PR00097">
    <property type="entry name" value="ANTSNTHASEII"/>
</dbReference>
<dbReference type="PRINTS" id="PR00099">
    <property type="entry name" value="CPSGATASE"/>
</dbReference>
<dbReference type="PRINTS" id="PR00096">
    <property type="entry name" value="GATASE"/>
</dbReference>
<dbReference type="SUPFAM" id="SSF52402">
    <property type="entry name" value="Adenine nucleotide alpha hydrolases-like"/>
    <property type="match status" value="1"/>
</dbReference>
<dbReference type="SUPFAM" id="SSF52317">
    <property type="entry name" value="Class I glutamine amidotransferase-like"/>
    <property type="match status" value="1"/>
</dbReference>
<dbReference type="SUPFAM" id="SSF54810">
    <property type="entry name" value="GMP synthetase C-terminal dimerisation domain"/>
    <property type="match status" value="1"/>
</dbReference>
<dbReference type="PROSITE" id="PS51273">
    <property type="entry name" value="GATASE_TYPE_1"/>
    <property type="match status" value="1"/>
</dbReference>
<dbReference type="PROSITE" id="PS51553">
    <property type="entry name" value="GMPS_ATP_PPASE"/>
    <property type="match status" value="1"/>
</dbReference>
<keyword id="KW-0067">ATP-binding</keyword>
<keyword id="KW-0315">Glutamine amidotransferase</keyword>
<keyword id="KW-0332">GMP biosynthesis</keyword>
<keyword id="KW-0436">Ligase</keyword>
<keyword id="KW-0547">Nucleotide-binding</keyword>
<keyword id="KW-0658">Purine biosynthesis</keyword>
<protein>
    <recommendedName>
        <fullName evidence="1">GMP synthase [glutamine-hydrolyzing]</fullName>
        <ecNumber evidence="1">6.3.5.2</ecNumber>
    </recommendedName>
    <alternativeName>
        <fullName evidence="1">GMP synthetase</fullName>
    </alternativeName>
    <alternativeName>
        <fullName evidence="1">Glutamine amidotransferase</fullName>
    </alternativeName>
</protein>
<sequence>MTQNIHQHRILILDFGSQYTQLVARRVRELGVYCELWAWDVTEAQIRGFNPNGIILSGGPESTTEFGSPRAPEYVFNAGVPVLGVCYGMQTMAMQLGGHVEGSNEREFGYAQVEVKTDSALVRDIQDALSATGAPLLDVWMSHGDKVTAIPEGFETVASTDTCPFAIMANEEKRFYGVQFHPEVTHTRQGQRMLERFVRDICQCEALWTPAKIIDDAVTRIREQVGNDQVILGLSGGVDSSVTAMLLHRAIGDRLTCVFVDNGLLRLNEADQVLEMFGDHFGLNIVHVAAEDRFLGELAGENDPEAKRKIIGRVFVEVFDEEASKQTDVKWLAQGTIYPDVIESAASATGKAHVIKSHHNVGGLPKEMKLGLVEPLKELFKDEVRKIGLELGLPYNMLYRHPFPGPGLGVRVLGEVKKEYCDLLRRADAIFIEELHKADLYNKVSQAFTVFLPVRSVGVMGDGRKYDWVVSLRAVETIDFMTAHWAHLPYDFLGRVSNRIINEVDGISRVVYDVSGKPPATIEWE</sequence>
<proteinExistence type="inferred from homology"/>
<reference key="1">
    <citation type="submission" date="2009-07" db="EMBL/GenBank/DDBJ databases">
        <title>Complete sequence of Pectobacterium carotovorum subsp. carotovorum PC1.</title>
        <authorList>
            <consortium name="US DOE Joint Genome Institute"/>
            <person name="Lucas S."/>
            <person name="Copeland A."/>
            <person name="Lapidus A."/>
            <person name="Glavina del Rio T."/>
            <person name="Tice H."/>
            <person name="Bruce D."/>
            <person name="Goodwin L."/>
            <person name="Pitluck S."/>
            <person name="Munk A.C."/>
            <person name="Brettin T."/>
            <person name="Detter J.C."/>
            <person name="Han C."/>
            <person name="Tapia R."/>
            <person name="Larimer F."/>
            <person name="Land M."/>
            <person name="Hauser L."/>
            <person name="Kyrpides N."/>
            <person name="Mikhailova N."/>
            <person name="Balakrishnan V."/>
            <person name="Glasner J."/>
            <person name="Perna N.T."/>
        </authorList>
    </citation>
    <scope>NUCLEOTIDE SEQUENCE [LARGE SCALE GENOMIC DNA]</scope>
    <source>
        <strain>PC1</strain>
    </source>
</reference>
<feature type="chain" id="PRO_1000205307" description="GMP synthase [glutamine-hydrolyzing]">
    <location>
        <begin position="1"/>
        <end position="525"/>
    </location>
</feature>
<feature type="domain" description="Glutamine amidotransferase type-1" evidence="1">
    <location>
        <begin position="9"/>
        <end position="207"/>
    </location>
</feature>
<feature type="domain" description="GMPS ATP-PPase" evidence="1">
    <location>
        <begin position="208"/>
        <end position="400"/>
    </location>
</feature>
<feature type="active site" description="Nucleophile" evidence="1">
    <location>
        <position position="86"/>
    </location>
</feature>
<feature type="active site" evidence="1">
    <location>
        <position position="181"/>
    </location>
</feature>
<feature type="active site" evidence="1">
    <location>
        <position position="183"/>
    </location>
</feature>
<feature type="binding site" evidence="1">
    <location>
        <begin position="235"/>
        <end position="241"/>
    </location>
    <ligand>
        <name>ATP</name>
        <dbReference type="ChEBI" id="CHEBI:30616"/>
    </ligand>
</feature>
<gene>
    <name evidence="1" type="primary">guaA</name>
    <name type="ordered locus">PC1_3003</name>
</gene>
<accession>C6DBG3</accession>
<organism>
    <name type="scientific">Pectobacterium carotovorum subsp. carotovorum (strain PC1)</name>
    <dbReference type="NCBI Taxonomy" id="561230"/>
    <lineage>
        <taxon>Bacteria</taxon>
        <taxon>Pseudomonadati</taxon>
        <taxon>Pseudomonadota</taxon>
        <taxon>Gammaproteobacteria</taxon>
        <taxon>Enterobacterales</taxon>
        <taxon>Pectobacteriaceae</taxon>
        <taxon>Pectobacterium</taxon>
    </lineage>
</organism>